<comment type="function">
    <text evidence="1">Catalyzes the transfer of the phosphoribosyl group of 5-phosphorylribose-1-pyrophosphate (PRPP) to anthranilate to yield N-(5'-phosphoribosyl)-anthranilate (PRA).</text>
</comment>
<comment type="catalytic activity">
    <reaction evidence="1">
        <text>N-(5-phospho-beta-D-ribosyl)anthranilate + diphosphate = 5-phospho-alpha-D-ribose 1-diphosphate + anthranilate</text>
        <dbReference type="Rhea" id="RHEA:11768"/>
        <dbReference type="ChEBI" id="CHEBI:16567"/>
        <dbReference type="ChEBI" id="CHEBI:18277"/>
        <dbReference type="ChEBI" id="CHEBI:33019"/>
        <dbReference type="ChEBI" id="CHEBI:58017"/>
        <dbReference type="EC" id="2.4.2.18"/>
    </reaction>
</comment>
<comment type="cofactor">
    <cofactor evidence="1">
        <name>Mg(2+)</name>
        <dbReference type="ChEBI" id="CHEBI:18420"/>
    </cofactor>
    <text evidence="1">Binds 2 magnesium ions per monomer.</text>
</comment>
<comment type="pathway">
    <text evidence="1">Amino-acid biosynthesis; L-tryptophan biosynthesis; L-tryptophan from chorismate: step 2/5.</text>
</comment>
<comment type="subunit">
    <text evidence="1">Homodimer.</text>
</comment>
<comment type="similarity">
    <text evidence="1">Belongs to the anthranilate phosphoribosyltransferase family.</text>
</comment>
<reference key="1">
    <citation type="journal article" date="2006" name="J. Bacteriol.">
        <title>Comparative genomic evidence for a close relationship between the dimorphic prosthecate bacteria Hyphomonas neptunium and Caulobacter crescentus.</title>
        <authorList>
            <person name="Badger J.H."/>
            <person name="Hoover T.R."/>
            <person name="Brun Y.V."/>
            <person name="Weiner R.M."/>
            <person name="Laub M.T."/>
            <person name="Alexandre G."/>
            <person name="Mrazek J."/>
            <person name="Ren Q."/>
            <person name="Paulsen I.T."/>
            <person name="Nelson K.E."/>
            <person name="Khouri H.M."/>
            <person name="Radune D."/>
            <person name="Sosa J."/>
            <person name="Dodson R.J."/>
            <person name="Sullivan S.A."/>
            <person name="Rosovitz M.J."/>
            <person name="Madupu R."/>
            <person name="Brinkac L.M."/>
            <person name="Durkin A.S."/>
            <person name="Daugherty S.C."/>
            <person name="Kothari S.P."/>
            <person name="Giglio M.G."/>
            <person name="Zhou L."/>
            <person name="Haft D.H."/>
            <person name="Selengut J.D."/>
            <person name="Davidsen T.M."/>
            <person name="Yang Q."/>
            <person name="Zafar N."/>
            <person name="Ward N.L."/>
        </authorList>
    </citation>
    <scope>NUCLEOTIDE SEQUENCE [LARGE SCALE GENOMIC DNA]</scope>
    <source>
        <strain>ATCC 15444</strain>
    </source>
</reference>
<feature type="chain" id="PRO_0000325431" description="Anthranilate phosphoribosyltransferase">
    <location>
        <begin position="1"/>
        <end position="341"/>
    </location>
</feature>
<feature type="binding site" evidence="1">
    <location>
        <position position="83"/>
    </location>
    <ligand>
        <name>5-phospho-alpha-D-ribose 1-diphosphate</name>
        <dbReference type="ChEBI" id="CHEBI:58017"/>
    </ligand>
</feature>
<feature type="binding site" evidence="1">
    <location>
        <position position="83"/>
    </location>
    <ligand>
        <name>anthranilate</name>
        <dbReference type="ChEBI" id="CHEBI:16567"/>
        <label>1</label>
    </ligand>
</feature>
<feature type="binding site" evidence="1">
    <location>
        <position position="91"/>
    </location>
    <ligand>
        <name>5-phospho-alpha-D-ribose 1-diphosphate</name>
        <dbReference type="ChEBI" id="CHEBI:58017"/>
    </ligand>
</feature>
<feature type="binding site" evidence="1">
    <location>
        <begin position="93"/>
        <end position="96"/>
    </location>
    <ligand>
        <name>5-phospho-alpha-D-ribose 1-diphosphate</name>
        <dbReference type="ChEBI" id="CHEBI:58017"/>
    </ligand>
</feature>
<feature type="binding site" evidence="1">
    <location>
        <position position="95"/>
    </location>
    <ligand>
        <name>Mg(2+)</name>
        <dbReference type="ChEBI" id="CHEBI:18420"/>
        <label>1</label>
    </ligand>
</feature>
<feature type="binding site" evidence="1">
    <location>
        <begin position="111"/>
        <end position="115"/>
    </location>
    <ligand>
        <name>5-phospho-alpha-D-ribose 1-diphosphate</name>
        <dbReference type="ChEBI" id="CHEBI:58017"/>
    </ligand>
</feature>
<feature type="binding site" evidence="1">
    <location>
        <position position="114"/>
    </location>
    <ligand>
        <name>anthranilate</name>
        <dbReference type="ChEBI" id="CHEBI:16567"/>
        <label>1</label>
    </ligand>
</feature>
<feature type="binding site" evidence="1">
    <location>
        <position position="123"/>
    </location>
    <ligand>
        <name>5-phospho-alpha-D-ribose 1-diphosphate</name>
        <dbReference type="ChEBI" id="CHEBI:58017"/>
    </ligand>
</feature>
<feature type="binding site" evidence="1">
    <location>
        <position position="169"/>
    </location>
    <ligand>
        <name>anthranilate</name>
        <dbReference type="ChEBI" id="CHEBI:16567"/>
        <label>2</label>
    </ligand>
</feature>
<feature type="binding site" evidence="1">
    <location>
        <position position="228"/>
    </location>
    <ligand>
        <name>Mg(2+)</name>
        <dbReference type="ChEBI" id="CHEBI:18420"/>
        <label>2</label>
    </ligand>
</feature>
<feature type="binding site" evidence="1">
    <location>
        <position position="229"/>
    </location>
    <ligand>
        <name>Mg(2+)</name>
        <dbReference type="ChEBI" id="CHEBI:18420"/>
        <label>1</label>
    </ligand>
</feature>
<feature type="binding site" evidence="1">
    <location>
        <position position="229"/>
    </location>
    <ligand>
        <name>Mg(2+)</name>
        <dbReference type="ChEBI" id="CHEBI:18420"/>
        <label>2</label>
    </ligand>
</feature>
<keyword id="KW-0028">Amino-acid biosynthesis</keyword>
<keyword id="KW-0057">Aromatic amino acid biosynthesis</keyword>
<keyword id="KW-0328">Glycosyltransferase</keyword>
<keyword id="KW-0460">Magnesium</keyword>
<keyword id="KW-0479">Metal-binding</keyword>
<keyword id="KW-1185">Reference proteome</keyword>
<keyword id="KW-0808">Transferase</keyword>
<keyword id="KW-0822">Tryptophan biosynthesis</keyword>
<name>TRPD_HYPNA</name>
<gene>
    <name evidence="1" type="primary">trpD</name>
    <name type="ordered locus">HNE_1788</name>
</gene>
<sequence length="341" mass="35447">MSESALNTAIQAIARGLPLEESVLEGAFDTLLSGEAAPEEVGAFLAGLTVRGETANELIAGARIMRRHGRSVSVEGPLLDTCGTGGLPWKSLNTSTASAIVIAAAGGRVAKHGNRSVPPKTGSADVLEALGLQLELSDTAFKSCLEIAGVGFLFARSYHSAMRHVAPIRHKLGIRTIFNLLGPLSNPAGAEYSVLGVYDKQWVTPMAEALKALGTRCAWVVHGLAGIDEISISGPTDVCEVTPASIRHFQITPSDAGLPSHPLSTLEGGAPEENTAAIRDLLDGREGPFRDIVLINAAAGLHVSGMVADLPAGVQRAAQAIDSGAARETLNTLVRTSRESD</sequence>
<accession>Q0C1A1</accession>
<protein>
    <recommendedName>
        <fullName evidence="1">Anthranilate phosphoribosyltransferase</fullName>
        <ecNumber evidence="1">2.4.2.18</ecNumber>
    </recommendedName>
</protein>
<evidence type="ECO:0000255" key="1">
    <source>
        <dbReference type="HAMAP-Rule" id="MF_00211"/>
    </source>
</evidence>
<proteinExistence type="inferred from homology"/>
<organism>
    <name type="scientific">Hyphomonas neptunium (strain ATCC 15444)</name>
    <dbReference type="NCBI Taxonomy" id="228405"/>
    <lineage>
        <taxon>Bacteria</taxon>
        <taxon>Pseudomonadati</taxon>
        <taxon>Pseudomonadota</taxon>
        <taxon>Alphaproteobacteria</taxon>
        <taxon>Hyphomonadales</taxon>
        <taxon>Hyphomonadaceae</taxon>
        <taxon>Hyphomonas</taxon>
    </lineage>
</organism>
<dbReference type="EC" id="2.4.2.18" evidence="1"/>
<dbReference type="EMBL" id="CP000158">
    <property type="protein sequence ID" value="ABI75412.1"/>
    <property type="molecule type" value="Genomic_DNA"/>
</dbReference>
<dbReference type="RefSeq" id="WP_011646792.1">
    <property type="nucleotide sequence ID" value="NC_008358.1"/>
</dbReference>
<dbReference type="SMR" id="Q0C1A1"/>
<dbReference type="STRING" id="228405.HNE_1788"/>
<dbReference type="KEGG" id="hne:HNE_1788"/>
<dbReference type="eggNOG" id="COG0547">
    <property type="taxonomic scope" value="Bacteria"/>
</dbReference>
<dbReference type="HOGENOM" id="CLU_034315_2_1_5"/>
<dbReference type="UniPathway" id="UPA00035">
    <property type="reaction ID" value="UER00041"/>
</dbReference>
<dbReference type="Proteomes" id="UP000001959">
    <property type="component" value="Chromosome"/>
</dbReference>
<dbReference type="GO" id="GO:0005829">
    <property type="term" value="C:cytosol"/>
    <property type="evidence" value="ECO:0007669"/>
    <property type="project" value="TreeGrafter"/>
</dbReference>
<dbReference type="GO" id="GO:0004048">
    <property type="term" value="F:anthranilate phosphoribosyltransferase activity"/>
    <property type="evidence" value="ECO:0007669"/>
    <property type="project" value="UniProtKB-UniRule"/>
</dbReference>
<dbReference type="GO" id="GO:0000287">
    <property type="term" value="F:magnesium ion binding"/>
    <property type="evidence" value="ECO:0007669"/>
    <property type="project" value="UniProtKB-UniRule"/>
</dbReference>
<dbReference type="GO" id="GO:0000162">
    <property type="term" value="P:L-tryptophan biosynthetic process"/>
    <property type="evidence" value="ECO:0007669"/>
    <property type="project" value="UniProtKB-UniRule"/>
</dbReference>
<dbReference type="FunFam" id="3.40.1030.10:FF:000002">
    <property type="entry name" value="Anthranilate phosphoribosyltransferase"/>
    <property type="match status" value="1"/>
</dbReference>
<dbReference type="Gene3D" id="3.40.1030.10">
    <property type="entry name" value="Nucleoside phosphorylase/phosphoribosyltransferase catalytic domain"/>
    <property type="match status" value="1"/>
</dbReference>
<dbReference type="Gene3D" id="1.20.970.10">
    <property type="entry name" value="Transferase, Pyrimidine Nucleoside Phosphorylase, Chain C"/>
    <property type="match status" value="1"/>
</dbReference>
<dbReference type="HAMAP" id="MF_00211">
    <property type="entry name" value="TrpD"/>
    <property type="match status" value="1"/>
</dbReference>
<dbReference type="InterPro" id="IPR005940">
    <property type="entry name" value="Anthranilate_Pribosyl_Tfrase"/>
</dbReference>
<dbReference type="InterPro" id="IPR000312">
    <property type="entry name" value="Glycosyl_Trfase_fam3"/>
</dbReference>
<dbReference type="InterPro" id="IPR017459">
    <property type="entry name" value="Glycosyl_Trfase_fam3_N_dom"/>
</dbReference>
<dbReference type="InterPro" id="IPR036320">
    <property type="entry name" value="Glycosyl_Trfase_fam3_N_dom_sf"/>
</dbReference>
<dbReference type="InterPro" id="IPR035902">
    <property type="entry name" value="Nuc_phospho_transferase"/>
</dbReference>
<dbReference type="NCBIfam" id="TIGR01245">
    <property type="entry name" value="trpD"/>
    <property type="match status" value="1"/>
</dbReference>
<dbReference type="PANTHER" id="PTHR43285">
    <property type="entry name" value="ANTHRANILATE PHOSPHORIBOSYLTRANSFERASE"/>
    <property type="match status" value="1"/>
</dbReference>
<dbReference type="PANTHER" id="PTHR43285:SF2">
    <property type="entry name" value="ANTHRANILATE PHOSPHORIBOSYLTRANSFERASE"/>
    <property type="match status" value="1"/>
</dbReference>
<dbReference type="Pfam" id="PF02885">
    <property type="entry name" value="Glycos_trans_3N"/>
    <property type="match status" value="1"/>
</dbReference>
<dbReference type="Pfam" id="PF00591">
    <property type="entry name" value="Glycos_transf_3"/>
    <property type="match status" value="1"/>
</dbReference>
<dbReference type="SUPFAM" id="SSF52418">
    <property type="entry name" value="Nucleoside phosphorylase/phosphoribosyltransferase catalytic domain"/>
    <property type="match status" value="1"/>
</dbReference>
<dbReference type="SUPFAM" id="SSF47648">
    <property type="entry name" value="Nucleoside phosphorylase/phosphoribosyltransferase N-terminal domain"/>
    <property type="match status" value="1"/>
</dbReference>